<feature type="chain" id="PRO_0000237839" description="Shikimate kinase">
    <location>
        <begin position="1"/>
        <end position="181"/>
    </location>
</feature>
<feature type="binding site" evidence="1">
    <location>
        <begin position="17"/>
        <end position="22"/>
    </location>
    <ligand>
        <name>ATP</name>
        <dbReference type="ChEBI" id="CHEBI:30616"/>
    </ligand>
</feature>
<feature type="binding site" evidence="1">
    <location>
        <position position="21"/>
    </location>
    <ligand>
        <name>Mg(2+)</name>
        <dbReference type="ChEBI" id="CHEBI:18420"/>
    </ligand>
</feature>
<feature type="binding site" evidence="1">
    <location>
        <position position="39"/>
    </location>
    <ligand>
        <name>substrate</name>
    </ligand>
</feature>
<feature type="binding site" evidence="1">
    <location>
        <position position="63"/>
    </location>
    <ligand>
        <name>substrate</name>
    </ligand>
</feature>
<feature type="binding site" evidence="1">
    <location>
        <position position="85"/>
    </location>
    <ligand>
        <name>substrate</name>
    </ligand>
</feature>
<feature type="binding site" evidence="1">
    <location>
        <position position="122"/>
    </location>
    <ligand>
        <name>ATP</name>
        <dbReference type="ChEBI" id="CHEBI:30616"/>
    </ligand>
</feature>
<feature type="binding site" evidence="1">
    <location>
        <position position="141"/>
    </location>
    <ligand>
        <name>substrate</name>
    </ligand>
</feature>
<reference key="1">
    <citation type="journal article" date="2014" name="Stand. Genomic Sci.">
        <title>Complete genome sequence of Anabaena variabilis ATCC 29413.</title>
        <authorList>
            <person name="Thiel T."/>
            <person name="Pratte B.S."/>
            <person name="Zhong J."/>
            <person name="Goodwin L."/>
            <person name="Copeland A."/>
            <person name="Lucas S."/>
            <person name="Han C."/>
            <person name="Pitluck S."/>
            <person name="Land M.L."/>
            <person name="Kyrpides N.C."/>
            <person name="Woyke T."/>
        </authorList>
    </citation>
    <scope>NUCLEOTIDE SEQUENCE [LARGE SCALE GENOMIC DNA]</scope>
    <source>
        <strain>ATCC 29413 / PCC 7937</strain>
    </source>
</reference>
<proteinExistence type="inferred from homology"/>
<organism>
    <name type="scientific">Trichormus variabilis (strain ATCC 29413 / PCC 7937)</name>
    <name type="common">Anabaena variabilis</name>
    <dbReference type="NCBI Taxonomy" id="240292"/>
    <lineage>
        <taxon>Bacteria</taxon>
        <taxon>Bacillati</taxon>
        <taxon>Cyanobacteriota</taxon>
        <taxon>Cyanophyceae</taxon>
        <taxon>Nostocales</taxon>
        <taxon>Nostocaceae</taxon>
        <taxon>Trichormus</taxon>
    </lineage>
</organism>
<comment type="function">
    <text evidence="1">Catalyzes the specific phosphorylation of the 3-hydroxyl group of shikimic acid using ATP as a cosubstrate.</text>
</comment>
<comment type="catalytic activity">
    <reaction evidence="1">
        <text>shikimate + ATP = 3-phosphoshikimate + ADP + H(+)</text>
        <dbReference type="Rhea" id="RHEA:13121"/>
        <dbReference type="ChEBI" id="CHEBI:15378"/>
        <dbReference type="ChEBI" id="CHEBI:30616"/>
        <dbReference type="ChEBI" id="CHEBI:36208"/>
        <dbReference type="ChEBI" id="CHEBI:145989"/>
        <dbReference type="ChEBI" id="CHEBI:456216"/>
        <dbReference type="EC" id="2.7.1.71"/>
    </reaction>
</comment>
<comment type="cofactor">
    <cofactor evidence="1">
        <name>Mg(2+)</name>
        <dbReference type="ChEBI" id="CHEBI:18420"/>
    </cofactor>
    <text evidence="1">Binds 1 Mg(2+) ion per subunit.</text>
</comment>
<comment type="pathway">
    <text evidence="1">Metabolic intermediate biosynthesis; chorismate biosynthesis; chorismate from D-erythrose 4-phosphate and phosphoenolpyruvate: step 5/7.</text>
</comment>
<comment type="subunit">
    <text evidence="1">Monomer.</text>
</comment>
<comment type="subcellular location">
    <subcellularLocation>
        <location evidence="1">Cytoplasm</location>
    </subcellularLocation>
</comment>
<comment type="similarity">
    <text evidence="1">Belongs to the shikimate kinase family.</text>
</comment>
<accession>Q3MFQ9</accession>
<keyword id="KW-0028">Amino-acid biosynthesis</keyword>
<keyword id="KW-0057">Aromatic amino acid biosynthesis</keyword>
<keyword id="KW-0067">ATP-binding</keyword>
<keyword id="KW-0963">Cytoplasm</keyword>
<keyword id="KW-0418">Kinase</keyword>
<keyword id="KW-0460">Magnesium</keyword>
<keyword id="KW-0479">Metal-binding</keyword>
<keyword id="KW-0547">Nucleotide-binding</keyword>
<keyword id="KW-0808">Transferase</keyword>
<evidence type="ECO:0000255" key="1">
    <source>
        <dbReference type="HAMAP-Rule" id="MF_00109"/>
    </source>
</evidence>
<name>AROK_TRIV2</name>
<protein>
    <recommendedName>
        <fullName evidence="1">Shikimate kinase</fullName>
        <shortName evidence="1">SK</shortName>
        <ecNumber evidence="1">2.7.1.71</ecNumber>
    </recommendedName>
</protein>
<gene>
    <name evidence="1" type="primary">aroK</name>
    <name type="ordered locus">Ava_0553</name>
</gene>
<dbReference type="EC" id="2.7.1.71" evidence="1"/>
<dbReference type="EMBL" id="CP000117">
    <property type="protein sequence ID" value="ABA20177.1"/>
    <property type="molecule type" value="Genomic_DNA"/>
</dbReference>
<dbReference type="SMR" id="Q3MFQ9"/>
<dbReference type="STRING" id="240292.Ava_0553"/>
<dbReference type="KEGG" id="ava:Ava_0553"/>
<dbReference type="eggNOG" id="COG0703">
    <property type="taxonomic scope" value="Bacteria"/>
</dbReference>
<dbReference type="HOGENOM" id="CLU_057607_2_3_3"/>
<dbReference type="UniPathway" id="UPA00053">
    <property type="reaction ID" value="UER00088"/>
</dbReference>
<dbReference type="Proteomes" id="UP000002533">
    <property type="component" value="Chromosome"/>
</dbReference>
<dbReference type="GO" id="GO:0005829">
    <property type="term" value="C:cytosol"/>
    <property type="evidence" value="ECO:0007669"/>
    <property type="project" value="TreeGrafter"/>
</dbReference>
<dbReference type="GO" id="GO:0005524">
    <property type="term" value="F:ATP binding"/>
    <property type="evidence" value="ECO:0007669"/>
    <property type="project" value="UniProtKB-UniRule"/>
</dbReference>
<dbReference type="GO" id="GO:0000287">
    <property type="term" value="F:magnesium ion binding"/>
    <property type="evidence" value="ECO:0007669"/>
    <property type="project" value="UniProtKB-UniRule"/>
</dbReference>
<dbReference type="GO" id="GO:0004765">
    <property type="term" value="F:shikimate kinase activity"/>
    <property type="evidence" value="ECO:0007669"/>
    <property type="project" value="UniProtKB-UniRule"/>
</dbReference>
<dbReference type="GO" id="GO:0008652">
    <property type="term" value="P:amino acid biosynthetic process"/>
    <property type="evidence" value="ECO:0007669"/>
    <property type="project" value="UniProtKB-KW"/>
</dbReference>
<dbReference type="GO" id="GO:0009073">
    <property type="term" value="P:aromatic amino acid family biosynthetic process"/>
    <property type="evidence" value="ECO:0007669"/>
    <property type="project" value="UniProtKB-KW"/>
</dbReference>
<dbReference type="GO" id="GO:0009423">
    <property type="term" value="P:chorismate biosynthetic process"/>
    <property type="evidence" value="ECO:0007669"/>
    <property type="project" value="UniProtKB-UniRule"/>
</dbReference>
<dbReference type="CDD" id="cd00464">
    <property type="entry name" value="SK"/>
    <property type="match status" value="1"/>
</dbReference>
<dbReference type="Gene3D" id="3.40.50.300">
    <property type="entry name" value="P-loop containing nucleotide triphosphate hydrolases"/>
    <property type="match status" value="1"/>
</dbReference>
<dbReference type="HAMAP" id="MF_00109">
    <property type="entry name" value="Shikimate_kinase"/>
    <property type="match status" value="1"/>
</dbReference>
<dbReference type="InterPro" id="IPR027417">
    <property type="entry name" value="P-loop_NTPase"/>
</dbReference>
<dbReference type="InterPro" id="IPR031322">
    <property type="entry name" value="Shikimate/glucono_kinase"/>
</dbReference>
<dbReference type="InterPro" id="IPR000623">
    <property type="entry name" value="Shikimate_kinase/TSH1"/>
</dbReference>
<dbReference type="PANTHER" id="PTHR21087">
    <property type="entry name" value="SHIKIMATE KINASE"/>
    <property type="match status" value="1"/>
</dbReference>
<dbReference type="PANTHER" id="PTHR21087:SF16">
    <property type="entry name" value="SHIKIMATE KINASE 1, CHLOROPLASTIC"/>
    <property type="match status" value="1"/>
</dbReference>
<dbReference type="Pfam" id="PF01202">
    <property type="entry name" value="SKI"/>
    <property type="match status" value="1"/>
</dbReference>
<dbReference type="PRINTS" id="PR01100">
    <property type="entry name" value="SHIKIMTKNASE"/>
</dbReference>
<dbReference type="SUPFAM" id="SSF52540">
    <property type="entry name" value="P-loop containing nucleoside triphosphate hydrolases"/>
    <property type="match status" value="1"/>
</dbReference>
<sequence>MSSLLQGVNLYLIGMMGAGKTTVGHLLAQELGYGFLDTDNVIAQAAKKSINEIFAEAGEAGFRQIESDVLAQVCSYTKLTVATGGGIVLRRENWSYLHHGLIVWLDVSVDILYARLAADTTRPLLQDDDPKGKLRSLLEQRTPLYSQADLRICVNAEETPEQIANKIMQVIPSVLKQTTAN</sequence>